<gene>
    <name evidence="1" type="primary">rpsO</name>
    <name type="ordered locus">Sca_0913</name>
</gene>
<keyword id="KW-1185">Reference proteome</keyword>
<keyword id="KW-0687">Ribonucleoprotein</keyword>
<keyword id="KW-0689">Ribosomal protein</keyword>
<keyword id="KW-0694">RNA-binding</keyword>
<keyword id="KW-0699">rRNA-binding</keyword>
<sequence>MAISQERKDEIIKEYRVHETDTGSPEVQIAVLTAEINALNEHLRTHKKDHHSRRGLLKMVGRRRHLLNYLRKKDIQRYRELIKSLGIRR</sequence>
<comment type="function">
    <text evidence="1">One of the primary rRNA binding proteins, it binds directly to 16S rRNA where it helps nucleate assembly of the platform of the 30S subunit by binding and bridging several RNA helices of the 16S rRNA.</text>
</comment>
<comment type="function">
    <text evidence="1">Forms an intersubunit bridge (bridge B4) with the 23S rRNA of the 50S subunit in the ribosome.</text>
</comment>
<comment type="subunit">
    <text evidence="1">Part of the 30S ribosomal subunit. Forms a bridge to the 50S subunit in the 70S ribosome, contacting the 23S rRNA.</text>
</comment>
<comment type="similarity">
    <text evidence="1">Belongs to the universal ribosomal protein uS15 family.</text>
</comment>
<name>RS15_STACT</name>
<proteinExistence type="inferred from homology"/>
<dbReference type="EMBL" id="AM295250">
    <property type="protein sequence ID" value="CAL27822.1"/>
    <property type="molecule type" value="Genomic_DNA"/>
</dbReference>
<dbReference type="RefSeq" id="WP_015900163.1">
    <property type="nucleotide sequence ID" value="NC_012121.1"/>
</dbReference>
<dbReference type="SMR" id="B9DPD9"/>
<dbReference type="GeneID" id="93793342"/>
<dbReference type="KEGG" id="sca:SCA_0913"/>
<dbReference type="eggNOG" id="COG0184">
    <property type="taxonomic scope" value="Bacteria"/>
</dbReference>
<dbReference type="HOGENOM" id="CLU_148518_0_0_9"/>
<dbReference type="OrthoDB" id="9799262at2"/>
<dbReference type="BioCyc" id="SCAR396513:SCA_RS04600-MONOMER"/>
<dbReference type="Proteomes" id="UP000000444">
    <property type="component" value="Chromosome"/>
</dbReference>
<dbReference type="GO" id="GO:0022627">
    <property type="term" value="C:cytosolic small ribosomal subunit"/>
    <property type="evidence" value="ECO:0007669"/>
    <property type="project" value="TreeGrafter"/>
</dbReference>
<dbReference type="GO" id="GO:0019843">
    <property type="term" value="F:rRNA binding"/>
    <property type="evidence" value="ECO:0007669"/>
    <property type="project" value="UniProtKB-UniRule"/>
</dbReference>
<dbReference type="GO" id="GO:0003735">
    <property type="term" value="F:structural constituent of ribosome"/>
    <property type="evidence" value="ECO:0007669"/>
    <property type="project" value="InterPro"/>
</dbReference>
<dbReference type="GO" id="GO:0006412">
    <property type="term" value="P:translation"/>
    <property type="evidence" value="ECO:0007669"/>
    <property type="project" value="UniProtKB-UniRule"/>
</dbReference>
<dbReference type="CDD" id="cd00353">
    <property type="entry name" value="Ribosomal_S15p_S13e"/>
    <property type="match status" value="1"/>
</dbReference>
<dbReference type="FunFam" id="1.10.287.10:FF:000002">
    <property type="entry name" value="30S ribosomal protein S15"/>
    <property type="match status" value="1"/>
</dbReference>
<dbReference type="Gene3D" id="6.10.250.3130">
    <property type="match status" value="1"/>
</dbReference>
<dbReference type="Gene3D" id="1.10.287.10">
    <property type="entry name" value="S15/NS1, RNA-binding"/>
    <property type="match status" value="1"/>
</dbReference>
<dbReference type="HAMAP" id="MF_01343_B">
    <property type="entry name" value="Ribosomal_uS15_B"/>
    <property type="match status" value="1"/>
</dbReference>
<dbReference type="InterPro" id="IPR000589">
    <property type="entry name" value="Ribosomal_uS15"/>
</dbReference>
<dbReference type="InterPro" id="IPR005290">
    <property type="entry name" value="Ribosomal_uS15_bac-type"/>
</dbReference>
<dbReference type="InterPro" id="IPR009068">
    <property type="entry name" value="uS15_NS1_RNA-bd_sf"/>
</dbReference>
<dbReference type="NCBIfam" id="TIGR00952">
    <property type="entry name" value="S15_bact"/>
    <property type="match status" value="1"/>
</dbReference>
<dbReference type="PANTHER" id="PTHR23321">
    <property type="entry name" value="RIBOSOMAL PROTEIN S15, BACTERIAL AND ORGANELLAR"/>
    <property type="match status" value="1"/>
</dbReference>
<dbReference type="PANTHER" id="PTHR23321:SF26">
    <property type="entry name" value="SMALL RIBOSOMAL SUBUNIT PROTEIN US15M"/>
    <property type="match status" value="1"/>
</dbReference>
<dbReference type="Pfam" id="PF00312">
    <property type="entry name" value="Ribosomal_S15"/>
    <property type="match status" value="1"/>
</dbReference>
<dbReference type="SMART" id="SM01387">
    <property type="entry name" value="Ribosomal_S15"/>
    <property type="match status" value="1"/>
</dbReference>
<dbReference type="SUPFAM" id="SSF47060">
    <property type="entry name" value="S15/NS1 RNA-binding domain"/>
    <property type="match status" value="1"/>
</dbReference>
<dbReference type="PROSITE" id="PS00362">
    <property type="entry name" value="RIBOSOMAL_S15"/>
    <property type="match status" value="1"/>
</dbReference>
<reference key="1">
    <citation type="journal article" date="2009" name="Appl. Environ. Microbiol.">
        <title>Genome analysis of the meat starter culture bacterium Staphylococcus carnosus TM300.</title>
        <authorList>
            <person name="Rosenstein R."/>
            <person name="Nerz C."/>
            <person name="Biswas L."/>
            <person name="Resch A."/>
            <person name="Raddatz G."/>
            <person name="Schuster S.C."/>
            <person name="Goetz F."/>
        </authorList>
    </citation>
    <scope>NUCLEOTIDE SEQUENCE [LARGE SCALE GENOMIC DNA]</scope>
    <source>
        <strain>TM300</strain>
    </source>
</reference>
<feature type="chain" id="PRO_1000166437" description="Small ribosomal subunit protein uS15">
    <location>
        <begin position="1"/>
        <end position="89"/>
    </location>
</feature>
<protein>
    <recommendedName>
        <fullName evidence="1">Small ribosomal subunit protein uS15</fullName>
    </recommendedName>
    <alternativeName>
        <fullName evidence="2">30S ribosomal protein S15</fullName>
    </alternativeName>
</protein>
<evidence type="ECO:0000255" key="1">
    <source>
        <dbReference type="HAMAP-Rule" id="MF_01343"/>
    </source>
</evidence>
<evidence type="ECO:0000305" key="2"/>
<organism>
    <name type="scientific">Staphylococcus carnosus (strain TM300)</name>
    <dbReference type="NCBI Taxonomy" id="396513"/>
    <lineage>
        <taxon>Bacteria</taxon>
        <taxon>Bacillati</taxon>
        <taxon>Bacillota</taxon>
        <taxon>Bacilli</taxon>
        <taxon>Bacillales</taxon>
        <taxon>Staphylococcaceae</taxon>
        <taxon>Staphylococcus</taxon>
    </lineage>
</organism>
<accession>B9DPD9</accession>